<dbReference type="EMBL" id="AJ965256">
    <property type="protein sequence ID" value="CAI82648.1"/>
    <property type="molecule type" value="Genomic_DNA"/>
</dbReference>
<dbReference type="RefSeq" id="WP_011309005.1">
    <property type="nucleotide sequence ID" value="NC_007356.1"/>
</dbReference>
<dbReference type="SMR" id="Q3ZZL5"/>
<dbReference type="KEGG" id="deh:cbdbA448"/>
<dbReference type="HOGENOM" id="CLU_073626_1_0_0"/>
<dbReference type="Proteomes" id="UP000000433">
    <property type="component" value="Chromosome"/>
</dbReference>
<dbReference type="GO" id="GO:0022627">
    <property type="term" value="C:cytosolic small ribosomal subunit"/>
    <property type="evidence" value="ECO:0007669"/>
    <property type="project" value="TreeGrafter"/>
</dbReference>
<dbReference type="GO" id="GO:0019843">
    <property type="term" value="F:rRNA binding"/>
    <property type="evidence" value="ECO:0007669"/>
    <property type="project" value="UniProtKB-UniRule"/>
</dbReference>
<dbReference type="GO" id="GO:0003735">
    <property type="term" value="F:structural constituent of ribosome"/>
    <property type="evidence" value="ECO:0007669"/>
    <property type="project" value="InterPro"/>
</dbReference>
<dbReference type="GO" id="GO:0006412">
    <property type="term" value="P:translation"/>
    <property type="evidence" value="ECO:0007669"/>
    <property type="project" value="UniProtKB-UniRule"/>
</dbReference>
<dbReference type="CDD" id="cd00364">
    <property type="entry name" value="Ribosomal_uS17"/>
    <property type="match status" value="1"/>
</dbReference>
<dbReference type="Gene3D" id="2.40.50.140">
    <property type="entry name" value="Nucleic acid-binding proteins"/>
    <property type="match status" value="1"/>
</dbReference>
<dbReference type="HAMAP" id="MF_01345_B">
    <property type="entry name" value="Ribosomal_uS17_B"/>
    <property type="match status" value="1"/>
</dbReference>
<dbReference type="InterPro" id="IPR012340">
    <property type="entry name" value="NA-bd_OB-fold"/>
</dbReference>
<dbReference type="InterPro" id="IPR000266">
    <property type="entry name" value="Ribosomal_uS17"/>
</dbReference>
<dbReference type="InterPro" id="IPR019984">
    <property type="entry name" value="Ribosomal_uS17_bact/chlr"/>
</dbReference>
<dbReference type="InterPro" id="IPR019979">
    <property type="entry name" value="Ribosomal_uS17_CS"/>
</dbReference>
<dbReference type="NCBIfam" id="NF004123">
    <property type="entry name" value="PRK05610.1"/>
    <property type="match status" value="1"/>
</dbReference>
<dbReference type="NCBIfam" id="TIGR03635">
    <property type="entry name" value="uS17_bact"/>
    <property type="match status" value="1"/>
</dbReference>
<dbReference type="PANTHER" id="PTHR10744">
    <property type="entry name" value="40S RIBOSOMAL PROTEIN S11 FAMILY MEMBER"/>
    <property type="match status" value="1"/>
</dbReference>
<dbReference type="PANTHER" id="PTHR10744:SF1">
    <property type="entry name" value="SMALL RIBOSOMAL SUBUNIT PROTEIN US17M"/>
    <property type="match status" value="1"/>
</dbReference>
<dbReference type="Pfam" id="PF00366">
    <property type="entry name" value="Ribosomal_S17"/>
    <property type="match status" value="1"/>
</dbReference>
<dbReference type="PRINTS" id="PR00973">
    <property type="entry name" value="RIBOSOMALS17"/>
</dbReference>
<dbReference type="SUPFAM" id="SSF50249">
    <property type="entry name" value="Nucleic acid-binding proteins"/>
    <property type="match status" value="1"/>
</dbReference>
<dbReference type="PROSITE" id="PS00056">
    <property type="entry name" value="RIBOSOMAL_S17"/>
    <property type="match status" value="1"/>
</dbReference>
<evidence type="ECO:0000255" key="1">
    <source>
        <dbReference type="HAMAP-Rule" id="MF_01345"/>
    </source>
</evidence>
<evidence type="ECO:0000305" key="2"/>
<protein>
    <recommendedName>
        <fullName evidence="1">Small ribosomal subunit protein uS17</fullName>
    </recommendedName>
    <alternativeName>
        <fullName evidence="2">30S ribosomal protein S17</fullName>
    </alternativeName>
</protein>
<sequence length="90" mass="10506">MEIKNKTRIGHVISDKMEKTIVVGIDVVKRHPLYKKTYRRTMKYLVHDEKNEAKIGDMIEIVECRPISKGKYWRLSKIITKGHIVAAQEA</sequence>
<gene>
    <name evidence="1" type="primary">rpsQ</name>
    <name type="ordered locus">cbdbA448</name>
</gene>
<name>RS17_DEHMC</name>
<accession>Q3ZZL5</accession>
<reference key="1">
    <citation type="journal article" date="2005" name="Nat. Biotechnol.">
        <title>Genome sequence of the chlorinated compound-respiring bacterium Dehalococcoides species strain CBDB1.</title>
        <authorList>
            <person name="Kube M."/>
            <person name="Beck A."/>
            <person name="Zinder S.H."/>
            <person name="Kuhl H."/>
            <person name="Reinhardt R."/>
            <person name="Adrian L."/>
        </authorList>
    </citation>
    <scope>NUCLEOTIDE SEQUENCE [LARGE SCALE GENOMIC DNA]</scope>
    <source>
        <strain>CBDB1</strain>
    </source>
</reference>
<feature type="chain" id="PRO_0000233470" description="Small ribosomal subunit protein uS17">
    <location>
        <begin position="1"/>
        <end position="90"/>
    </location>
</feature>
<proteinExistence type="inferred from homology"/>
<comment type="function">
    <text evidence="1">One of the primary rRNA binding proteins, it binds specifically to the 5'-end of 16S ribosomal RNA.</text>
</comment>
<comment type="subunit">
    <text evidence="1">Part of the 30S ribosomal subunit.</text>
</comment>
<comment type="similarity">
    <text evidence="1">Belongs to the universal ribosomal protein uS17 family.</text>
</comment>
<organism>
    <name type="scientific">Dehalococcoides mccartyi (strain CBDB1)</name>
    <dbReference type="NCBI Taxonomy" id="255470"/>
    <lineage>
        <taxon>Bacteria</taxon>
        <taxon>Bacillati</taxon>
        <taxon>Chloroflexota</taxon>
        <taxon>Dehalococcoidia</taxon>
        <taxon>Dehalococcoidales</taxon>
        <taxon>Dehalococcoidaceae</taxon>
        <taxon>Dehalococcoides</taxon>
    </lineage>
</organism>
<keyword id="KW-0687">Ribonucleoprotein</keyword>
<keyword id="KW-0689">Ribosomal protein</keyword>
<keyword id="KW-0694">RNA-binding</keyword>
<keyword id="KW-0699">rRNA-binding</keyword>